<sequence>MEVILLEKVANLGDLGDRVKVRPGYGRNYLVPQGKAKPATKENIRYFEERRAELERQAQEALAAAEARKEQLEGLTVTISAKSGEEGKLFGSVGTQDVADAITAAGVEVARREVRMPEGPIRVTGEYELELGLHTDVTALVKVVVQSQEA</sequence>
<feature type="chain" id="PRO_1000014734" description="Large ribosomal subunit protein bL9">
    <location>
        <begin position="1"/>
        <end position="150"/>
    </location>
</feature>
<gene>
    <name evidence="1" type="primary">rplI</name>
    <name type="ordered locus">Mlg_0586</name>
</gene>
<dbReference type="EMBL" id="CP000453">
    <property type="protein sequence ID" value="ABI55940.1"/>
    <property type="molecule type" value="Genomic_DNA"/>
</dbReference>
<dbReference type="RefSeq" id="WP_011628335.1">
    <property type="nucleotide sequence ID" value="NC_008340.1"/>
</dbReference>
<dbReference type="SMR" id="Q0AB47"/>
<dbReference type="KEGG" id="aeh:Mlg_0586"/>
<dbReference type="eggNOG" id="COG0359">
    <property type="taxonomic scope" value="Bacteria"/>
</dbReference>
<dbReference type="HOGENOM" id="CLU_078938_4_1_6"/>
<dbReference type="OrthoDB" id="9788336at2"/>
<dbReference type="Proteomes" id="UP000001962">
    <property type="component" value="Chromosome"/>
</dbReference>
<dbReference type="GO" id="GO:1990904">
    <property type="term" value="C:ribonucleoprotein complex"/>
    <property type="evidence" value="ECO:0007669"/>
    <property type="project" value="UniProtKB-KW"/>
</dbReference>
<dbReference type="GO" id="GO:0005840">
    <property type="term" value="C:ribosome"/>
    <property type="evidence" value="ECO:0007669"/>
    <property type="project" value="UniProtKB-KW"/>
</dbReference>
<dbReference type="GO" id="GO:0019843">
    <property type="term" value="F:rRNA binding"/>
    <property type="evidence" value="ECO:0007669"/>
    <property type="project" value="UniProtKB-UniRule"/>
</dbReference>
<dbReference type="GO" id="GO:0003735">
    <property type="term" value="F:structural constituent of ribosome"/>
    <property type="evidence" value="ECO:0007669"/>
    <property type="project" value="InterPro"/>
</dbReference>
<dbReference type="GO" id="GO:0006412">
    <property type="term" value="P:translation"/>
    <property type="evidence" value="ECO:0007669"/>
    <property type="project" value="UniProtKB-UniRule"/>
</dbReference>
<dbReference type="Gene3D" id="3.10.430.100">
    <property type="entry name" value="Ribosomal protein L9, C-terminal domain"/>
    <property type="match status" value="1"/>
</dbReference>
<dbReference type="Gene3D" id="3.40.5.10">
    <property type="entry name" value="Ribosomal protein L9, N-terminal domain"/>
    <property type="match status" value="1"/>
</dbReference>
<dbReference type="HAMAP" id="MF_00503">
    <property type="entry name" value="Ribosomal_bL9"/>
    <property type="match status" value="1"/>
</dbReference>
<dbReference type="InterPro" id="IPR000244">
    <property type="entry name" value="Ribosomal_bL9"/>
</dbReference>
<dbReference type="InterPro" id="IPR009027">
    <property type="entry name" value="Ribosomal_bL9/RNase_H1_N"/>
</dbReference>
<dbReference type="InterPro" id="IPR020594">
    <property type="entry name" value="Ribosomal_bL9_bac/chp"/>
</dbReference>
<dbReference type="InterPro" id="IPR020069">
    <property type="entry name" value="Ribosomal_bL9_C"/>
</dbReference>
<dbReference type="InterPro" id="IPR036791">
    <property type="entry name" value="Ribosomal_bL9_C_sf"/>
</dbReference>
<dbReference type="InterPro" id="IPR020070">
    <property type="entry name" value="Ribosomal_bL9_N"/>
</dbReference>
<dbReference type="InterPro" id="IPR036935">
    <property type="entry name" value="Ribosomal_bL9_N_sf"/>
</dbReference>
<dbReference type="NCBIfam" id="TIGR00158">
    <property type="entry name" value="L9"/>
    <property type="match status" value="1"/>
</dbReference>
<dbReference type="PANTHER" id="PTHR21368">
    <property type="entry name" value="50S RIBOSOMAL PROTEIN L9"/>
    <property type="match status" value="1"/>
</dbReference>
<dbReference type="Pfam" id="PF03948">
    <property type="entry name" value="Ribosomal_L9_C"/>
    <property type="match status" value="1"/>
</dbReference>
<dbReference type="Pfam" id="PF01281">
    <property type="entry name" value="Ribosomal_L9_N"/>
    <property type="match status" value="1"/>
</dbReference>
<dbReference type="SUPFAM" id="SSF55658">
    <property type="entry name" value="L9 N-domain-like"/>
    <property type="match status" value="1"/>
</dbReference>
<dbReference type="SUPFAM" id="SSF55653">
    <property type="entry name" value="Ribosomal protein L9 C-domain"/>
    <property type="match status" value="1"/>
</dbReference>
<dbReference type="PROSITE" id="PS00651">
    <property type="entry name" value="RIBOSOMAL_L9"/>
    <property type="match status" value="1"/>
</dbReference>
<accession>Q0AB47</accession>
<reference key="1">
    <citation type="submission" date="2006-08" db="EMBL/GenBank/DDBJ databases">
        <title>Complete sequence of Alkalilimnicola ehrilichei MLHE-1.</title>
        <authorList>
            <person name="Copeland A."/>
            <person name="Lucas S."/>
            <person name="Lapidus A."/>
            <person name="Barry K."/>
            <person name="Detter J.C."/>
            <person name="Glavina del Rio T."/>
            <person name="Hammon N."/>
            <person name="Israni S."/>
            <person name="Dalin E."/>
            <person name="Tice H."/>
            <person name="Pitluck S."/>
            <person name="Sims D."/>
            <person name="Brettin T."/>
            <person name="Bruce D."/>
            <person name="Han C."/>
            <person name="Tapia R."/>
            <person name="Gilna P."/>
            <person name="Schmutz J."/>
            <person name="Larimer F."/>
            <person name="Land M."/>
            <person name="Hauser L."/>
            <person name="Kyrpides N."/>
            <person name="Mikhailova N."/>
            <person name="Oremland R.S."/>
            <person name="Hoeft S.E."/>
            <person name="Switzer-Blum J."/>
            <person name="Kulp T."/>
            <person name="King G."/>
            <person name="Tabita R."/>
            <person name="Witte B."/>
            <person name="Santini J.M."/>
            <person name="Basu P."/>
            <person name="Hollibaugh J.T."/>
            <person name="Xie G."/>
            <person name="Stolz J.F."/>
            <person name="Richardson P."/>
        </authorList>
    </citation>
    <scope>NUCLEOTIDE SEQUENCE [LARGE SCALE GENOMIC DNA]</scope>
    <source>
        <strain>ATCC BAA-1101 / DSM 17681 / MLHE-1</strain>
    </source>
</reference>
<evidence type="ECO:0000255" key="1">
    <source>
        <dbReference type="HAMAP-Rule" id="MF_00503"/>
    </source>
</evidence>
<evidence type="ECO:0000305" key="2"/>
<organism>
    <name type="scientific">Alkalilimnicola ehrlichii (strain ATCC BAA-1101 / DSM 17681 / MLHE-1)</name>
    <dbReference type="NCBI Taxonomy" id="187272"/>
    <lineage>
        <taxon>Bacteria</taxon>
        <taxon>Pseudomonadati</taxon>
        <taxon>Pseudomonadota</taxon>
        <taxon>Gammaproteobacteria</taxon>
        <taxon>Chromatiales</taxon>
        <taxon>Ectothiorhodospiraceae</taxon>
        <taxon>Alkalilimnicola</taxon>
    </lineage>
</organism>
<name>RL9_ALKEH</name>
<protein>
    <recommendedName>
        <fullName evidence="1">Large ribosomal subunit protein bL9</fullName>
    </recommendedName>
    <alternativeName>
        <fullName evidence="2">50S ribosomal protein L9</fullName>
    </alternativeName>
</protein>
<comment type="function">
    <text evidence="1">Binds to the 23S rRNA.</text>
</comment>
<comment type="similarity">
    <text evidence="1">Belongs to the bacterial ribosomal protein bL9 family.</text>
</comment>
<proteinExistence type="inferred from homology"/>
<keyword id="KW-1185">Reference proteome</keyword>
<keyword id="KW-0687">Ribonucleoprotein</keyword>
<keyword id="KW-0689">Ribosomal protein</keyword>
<keyword id="KW-0694">RNA-binding</keyword>
<keyword id="KW-0699">rRNA-binding</keyword>